<sequence length="294" mass="32659">MSQAFRTLALLGKANNDDVNQTINALYKFLREQNYNVLTETRLAHQLPCPAEHCMDIVELGKNADLAIVVGGDGHMLGAARVLARYDVPVIGVNRGNLGFLTDLSPHDFEVSLQQVLSGDYQTEHRFLLETTIYRHGEPKSSNTALNEAVLHPGKIAHMIEYSVYIDDSFVFSQRADGMIVSTPTGSTAYALSAGGPILMPQLDVMTLVPMFPHTLSCRPIVIDAHRQVKLVISPDNPDEQLHVSCDGHVTLSVHPGDEIIIRRAPHQLTLLHPKDYDYFNVLRTKLGWSNQLF</sequence>
<dbReference type="EC" id="2.7.1.23" evidence="1"/>
<dbReference type="EMBL" id="CP001616">
    <property type="protein sequence ID" value="ACQ93857.1"/>
    <property type="molecule type" value="Genomic_DNA"/>
</dbReference>
<dbReference type="RefSeq" id="WP_015879325.1">
    <property type="nucleotide sequence ID" value="NC_012691.1"/>
</dbReference>
<dbReference type="SMR" id="C4L8Y7"/>
<dbReference type="STRING" id="595494.Tola_2259"/>
<dbReference type="KEGG" id="tau:Tola_2259"/>
<dbReference type="eggNOG" id="COG0061">
    <property type="taxonomic scope" value="Bacteria"/>
</dbReference>
<dbReference type="HOGENOM" id="CLU_008831_0_1_6"/>
<dbReference type="OrthoDB" id="9774737at2"/>
<dbReference type="Proteomes" id="UP000009073">
    <property type="component" value="Chromosome"/>
</dbReference>
<dbReference type="GO" id="GO:0005737">
    <property type="term" value="C:cytoplasm"/>
    <property type="evidence" value="ECO:0007669"/>
    <property type="project" value="UniProtKB-SubCell"/>
</dbReference>
<dbReference type="GO" id="GO:0005524">
    <property type="term" value="F:ATP binding"/>
    <property type="evidence" value="ECO:0007669"/>
    <property type="project" value="UniProtKB-KW"/>
</dbReference>
<dbReference type="GO" id="GO:0046872">
    <property type="term" value="F:metal ion binding"/>
    <property type="evidence" value="ECO:0007669"/>
    <property type="project" value="UniProtKB-UniRule"/>
</dbReference>
<dbReference type="GO" id="GO:0051287">
    <property type="term" value="F:NAD binding"/>
    <property type="evidence" value="ECO:0007669"/>
    <property type="project" value="UniProtKB-ARBA"/>
</dbReference>
<dbReference type="GO" id="GO:0003951">
    <property type="term" value="F:NAD+ kinase activity"/>
    <property type="evidence" value="ECO:0007669"/>
    <property type="project" value="UniProtKB-UniRule"/>
</dbReference>
<dbReference type="GO" id="GO:0019674">
    <property type="term" value="P:NAD metabolic process"/>
    <property type="evidence" value="ECO:0007669"/>
    <property type="project" value="InterPro"/>
</dbReference>
<dbReference type="GO" id="GO:0006741">
    <property type="term" value="P:NADP biosynthetic process"/>
    <property type="evidence" value="ECO:0007669"/>
    <property type="project" value="UniProtKB-UniRule"/>
</dbReference>
<dbReference type="FunFam" id="2.60.200.30:FF:000001">
    <property type="entry name" value="NAD kinase"/>
    <property type="match status" value="1"/>
</dbReference>
<dbReference type="Gene3D" id="3.40.50.10330">
    <property type="entry name" value="Probable inorganic polyphosphate/atp-NAD kinase, domain 1"/>
    <property type="match status" value="1"/>
</dbReference>
<dbReference type="Gene3D" id="2.60.200.30">
    <property type="entry name" value="Probable inorganic polyphosphate/atp-NAD kinase, domain 2"/>
    <property type="match status" value="1"/>
</dbReference>
<dbReference type="HAMAP" id="MF_00361">
    <property type="entry name" value="NAD_kinase"/>
    <property type="match status" value="1"/>
</dbReference>
<dbReference type="InterPro" id="IPR017438">
    <property type="entry name" value="ATP-NAD_kinase_N"/>
</dbReference>
<dbReference type="InterPro" id="IPR017437">
    <property type="entry name" value="ATP-NAD_kinase_PpnK-typ_C"/>
</dbReference>
<dbReference type="InterPro" id="IPR016064">
    <property type="entry name" value="NAD/diacylglycerol_kinase_sf"/>
</dbReference>
<dbReference type="InterPro" id="IPR002504">
    <property type="entry name" value="NADK"/>
</dbReference>
<dbReference type="NCBIfam" id="NF002306">
    <property type="entry name" value="PRK01231.1"/>
    <property type="match status" value="1"/>
</dbReference>
<dbReference type="NCBIfam" id="NF002893">
    <property type="entry name" value="PRK03378.1"/>
    <property type="match status" value="1"/>
</dbReference>
<dbReference type="PANTHER" id="PTHR20275">
    <property type="entry name" value="NAD KINASE"/>
    <property type="match status" value="1"/>
</dbReference>
<dbReference type="PANTHER" id="PTHR20275:SF0">
    <property type="entry name" value="NAD KINASE"/>
    <property type="match status" value="1"/>
</dbReference>
<dbReference type="Pfam" id="PF01513">
    <property type="entry name" value="NAD_kinase"/>
    <property type="match status" value="1"/>
</dbReference>
<dbReference type="Pfam" id="PF20143">
    <property type="entry name" value="NAD_kinase_C"/>
    <property type="match status" value="1"/>
</dbReference>
<dbReference type="SUPFAM" id="SSF111331">
    <property type="entry name" value="NAD kinase/diacylglycerol kinase-like"/>
    <property type="match status" value="1"/>
</dbReference>
<accession>C4L8Y7</accession>
<comment type="function">
    <text evidence="1">Involved in the regulation of the intracellular balance of NAD and NADP, and is a key enzyme in the biosynthesis of NADP. Catalyzes specifically the phosphorylation on 2'-hydroxyl of the adenosine moiety of NAD to yield NADP.</text>
</comment>
<comment type="catalytic activity">
    <reaction evidence="1">
        <text>NAD(+) + ATP = ADP + NADP(+) + H(+)</text>
        <dbReference type="Rhea" id="RHEA:18629"/>
        <dbReference type="ChEBI" id="CHEBI:15378"/>
        <dbReference type="ChEBI" id="CHEBI:30616"/>
        <dbReference type="ChEBI" id="CHEBI:57540"/>
        <dbReference type="ChEBI" id="CHEBI:58349"/>
        <dbReference type="ChEBI" id="CHEBI:456216"/>
        <dbReference type="EC" id="2.7.1.23"/>
    </reaction>
</comment>
<comment type="cofactor">
    <cofactor evidence="1">
        <name>a divalent metal cation</name>
        <dbReference type="ChEBI" id="CHEBI:60240"/>
    </cofactor>
</comment>
<comment type="subcellular location">
    <subcellularLocation>
        <location evidence="1">Cytoplasm</location>
    </subcellularLocation>
</comment>
<comment type="similarity">
    <text evidence="1">Belongs to the NAD kinase family.</text>
</comment>
<feature type="chain" id="PRO_1000205434" description="NAD kinase">
    <location>
        <begin position="1"/>
        <end position="294"/>
    </location>
</feature>
<feature type="active site" description="Proton acceptor" evidence="1">
    <location>
        <position position="73"/>
    </location>
</feature>
<feature type="binding site" evidence="1">
    <location>
        <begin position="73"/>
        <end position="74"/>
    </location>
    <ligand>
        <name>NAD(+)</name>
        <dbReference type="ChEBI" id="CHEBI:57540"/>
    </ligand>
</feature>
<feature type="binding site" evidence="1">
    <location>
        <begin position="147"/>
        <end position="148"/>
    </location>
    <ligand>
        <name>NAD(+)</name>
        <dbReference type="ChEBI" id="CHEBI:57540"/>
    </ligand>
</feature>
<feature type="binding site" evidence="1">
    <location>
        <position position="158"/>
    </location>
    <ligand>
        <name>NAD(+)</name>
        <dbReference type="ChEBI" id="CHEBI:57540"/>
    </ligand>
</feature>
<feature type="binding site" evidence="1">
    <location>
        <position position="175"/>
    </location>
    <ligand>
        <name>NAD(+)</name>
        <dbReference type="ChEBI" id="CHEBI:57540"/>
    </ligand>
</feature>
<feature type="binding site" evidence="1">
    <location>
        <position position="177"/>
    </location>
    <ligand>
        <name>NAD(+)</name>
        <dbReference type="ChEBI" id="CHEBI:57540"/>
    </ligand>
</feature>
<feature type="binding site" evidence="1">
    <location>
        <begin position="188"/>
        <end position="193"/>
    </location>
    <ligand>
        <name>NAD(+)</name>
        <dbReference type="ChEBI" id="CHEBI:57540"/>
    </ligand>
</feature>
<evidence type="ECO:0000255" key="1">
    <source>
        <dbReference type="HAMAP-Rule" id="MF_00361"/>
    </source>
</evidence>
<name>NADK_TOLAT</name>
<keyword id="KW-0067">ATP-binding</keyword>
<keyword id="KW-0963">Cytoplasm</keyword>
<keyword id="KW-0418">Kinase</keyword>
<keyword id="KW-0520">NAD</keyword>
<keyword id="KW-0521">NADP</keyword>
<keyword id="KW-0547">Nucleotide-binding</keyword>
<keyword id="KW-1185">Reference proteome</keyword>
<keyword id="KW-0808">Transferase</keyword>
<gene>
    <name evidence="1" type="primary">nadK</name>
    <name type="ordered locus">Tola_2259</name>
</gene>
<organism>
    <name type="scientific">Tolumonas auensis (strain DSM 9187 / NBRC 110442 / TA 4)</name>
    <dbReference type="NCBI Taxonomy" id="595494"/>
    <lineage>
        <taxon>Bacteria</taxon>
        <taxon>Pseudomonadati</taxon>
        <taxon>Pseudomonadota</taxon>
        <taxon>Gammaproteobacteria</taxon>
        <taxon>Aeromonadales</taxon>
        <taxon>Aeromonadaceae</taxon>
        <taxon>Tolumonas</taxon>
    </lineage>
</organism>
<reference key="1">
    <citation type="submission" date="2009-05" db="EMBL/GenBank/DDBJ databases">
        <title>Complete sequence of Tolumonas auensis DSM 9187.</title>
        <authorList>
            <consortium name="US DOE Joint Genome Institute"/>
            <person name="Lucas S."/>
            <person name="Copeland A."/>
            <person name="Lapidus A."/>
            <person name="Glavina del Rio T."/>
            <person name="Tice H."/>
            <person name="Bruce D."/>
            <person name="Goodwin L."/>
            <person name="Pitluck S."/>
            <person name="Chertkov O."/>
            <person name="Brettin T."/>
            <person name="Detter J.C."/>
            <person name="Han C."/>
            <person name="Larimer F."/>
            <person name="Land M."/>
            <person name="Hauser L."/>
            <person name="Kyrpides N."/>
            <person name="Mikhailova N."/>
            <person name="Spring S."/>
            <person name="Beller H."/>
        </authorList>
    </citation>
    <scope>NUCLEOTIDE SEQUENCE [LARGE SCALE GENOMIC DNA]</scope>
    <source>
        <strain>DSM 9187 / NBRC 110442 / TA 4</strain>
    </source>
</reference>
<proteinExistence type="inferred from homology"/>
<protein>
    <recommendedName>
        <fullName evidence="1">NAD kinase</fullName>
        <ecNumber evidence="1">2.7.1.23</ecNumber>
    </recommendedName>
    <alternativeName>
        <fullName evidence="1">ATP-dependent NAD kinase</fullName>
    </alternativeName>
</protein>